<evidence type="ECO:0000255" key="1">
    <source>
        <dbReference type="HAMAP-Rule" id="MF_01694"/>
    </source>
</evidence>
<evidence type="ECO:0000255" key="2">
    <source>
        <dbReference type="PROSITE-ProRule" id="PRU01266"/>
    </source>
</evidence>
<protein>
    <recommendedName>
        <fullName evidence="1">Biotin synthase</fullName>
        <ecNumber evidence="1">2.8.1.6</ecNumber>
    </recommendedName>
</protein>
<feature type="chain" id="PRO_0000381457" description="Biotin synthase">
    <location>
        <begin position="1"/>
        <end position="325"/>
    </location>
</feature>
<feature type="domain" description="Radical SAM core" evidence="2">
    <location>
        <begin position="46"/>
        <end position="270"/>
    </location>
</feature>
<feature type="binding site" evidence="1">
    <location>
        <position position="64"/>
    </location>
    <ligand>
        <name>[4Fe-4S] cluster</name>
        <dbReference type="ChEBI" id="CHEBI:49883"/>
        <note>4Fe-4S-S-AdoMet</note>
    </ligand>
</feature>
<feature type="binding site" evidence="1">
    <location>
        <position position="68"/>
    </location>
    <ligand>
        <name>[4Fe-4S] cluster</name>
        <dbReference type="ChEBI" id="CHEBI:49883"/>
        <note>4Fe-4S-S-AdoMet</note>
    </ligand>
</feature>
<feature type="binding site" evidence="1">
    <location>
        <position position="71"/>
    </location>
    <ligand>
        <name>[4Fe-4S] cluster</name>
        <dbReference type="ChEBI" id="CHEBI:49883"/>
        <note>4Fe-4S-S-AdoMet</note>
    </ligand>
</feature>
<feature type="binding site" evidence="1">
    <location>
        <position position="107"/>
    </location>
    <ligand>
        <name>[2Fe-2S] cluster</name>
        <dbReference type="ChEBI" id="CHEBI:190135"/>
    </ligand>
</feature>
<feature type="binding site" evidence="1">
    <location>
        <position position="139"/>
    </location>
    <ligand>
        <name>[2Fe-2S] cluster</name>
        <dbReference type="ChEBI" id="CHEBI:190135"/>
    </ligand>
</feature>
<feature type="binding site" evidence="1">
    <location>
        <position position="198"/>
    </location>
    <ligand>
        <name>[2Fe-2S] cluster</name>
        <dbReference type="ChEBI" id="CHEBI:190135"/>
    </ligand>
</feature>
<feature type="binding site" evidence="1">
    <location>
        <position position="274"/>
    </location>
    <ligand>
        <name>[2Fe-2S] cluster</name>
        <dbReference type="ChEBI" id="CHEBI:190135"/>
    </ligand>
</feature>
<keyword id="KW-0001">2Fe-2S</keyword>
<keyword id="KW-0004">4Fe-4S</keyword>
<keyword id="KW-0093">Biotin biosynthesis</keyword>
<keyword id="KW-0408">Iron</keyword>
<keyword id="KW-0411">Iron-sulfur</keyword>
<keyword id="KW-0479">Metal-binding</keyword>
<keyword id="KW-0949">S-adenosyl-L-methionine</keyword>
<keyword id="KW-0808">Transferase</keyword>
<reference key="1">
    <citation type="submission" date="2007-06" db="EMBL/GenBank/DDBJ databases">
        <title>Complete sequence of Methanococcus aeolicus Nankai-3.</title>
        <authorList>
            <consortium name="US DOE Joint Genome Institute"/>
            <person name="Copeland A."/>
            <person name="Lucas S."/>
            <person name="Lapidus A."/>
            <person name="Barry K."/>
            <person name="Glavina del Rio T."/>
            <person name="Dalin E."/>
            <person name="Tice H."/>
            <person name="Pitluck S."/>
            <person name="Chain P."/>
            <person name="Malfatti S."/>
            <person name="Shin M."/>
            <person name="Vergez L."/>
            <person name="Schmutz J."/>
            <person name="Larimer F."/>
            <person name="Land M."/>
            <person name="Hauser L."/>
            <person name="Kyrpides N."/>
            <person name="Lykidis A."/>
            <person name="Sieprawska-Lupa M."/>
            <person name="Whitman W.B."/>
            <person name="Richardson P."/>
        </authorList>
    </citation>
    <scope>NUCLEOTIDE SEQUENCE [LARGE SCALE GENOMIC DNA]</scope>
    <source>
        <strain>ATCC BAA-1280 / DSM 17508 / OCM 812 / Nankai-3</strain>
    </source>
</reference>
<proteinExistence type="inferred from homology"/>
<organism>
    <name type="scientific">Methanococcus aeolicus (strain ATCC BAA-1280 / DSM 17508 / OCM 812 / Nankai-3)</name>
    <dbReference type="NCBI Taxonomy" id="419665"/>
    <lineage>
        <taxon>Archaea</taxon>
        <taxon>Methanobacteriati</taxon>
        <taxon>Methanobacteriota</taxon>
        <taxon>Methanomada group</taxon>
        <taxon>Methanococci</taxon>
        <taxon>Methanococcales</taxon>
        <taxon>Methanococcaceae</taxon>
        <taxon>Methanococcus</taxon>
    </lineage>
</organism>
<comment type="function">
    <text evidence="1">Catalyzes the conversion of dethiobiotin (DTB) to biotin by the insertion of a sulfur atom into dethiobiotin via a radical-based mechanism.</text>
</comment>
<comment type="catalytic activity">
    <reaction evidence="1">
        <text>(4R,5S)-dethiobiotin + (sulfur carrier)-SH + 2 reduced [2Fe-2S]-[ferredoxin] + 2 S-adenosyl-L-methionine = (sulfur carrier)-H + biotin + 2 5'-deoxyadenosine + 2 L-methionine + 2 oxidized [2Fe-2S]-[ferredoxin]</text>
        <dbReference type="Rhea" id="RHEA:22060"/>
        <dbReference type="Rhea" id="RHEA-COMP:10000"/>
        <dbReference type="Rhea" id="RHEA-COMP:10001"/>
        <dbReference type="Rhea" id="RHEA-COMP:14737"/>
        <dbReference type="Rhea" id="RHEA-COMP:14739"/>
        <dbReference type="ChEBI" id="CHEBI:17319"/>
        <dbReference type="ChEBI" id="CHEBI:29917"/>
        <dbReference type="ChEBI" id="CHEBI:33737"/>
        <dbReference type="ChEBI" id="CHEBI:33738"/>
        <dbReference type="ChEBI" id="CHEBI:57586"/>
        <dbReference type="ChEBI" id="CHEBI:57844"/>
        <dbReference type="ChEBI" id="CHEBI:59789"/>
        <dbReference type="ChEBI" id="CHEBI:64428"/>
        <dbReference type="ChEBI" id="CHEBI:149473"/>
        <dbReference type="EC" id="2.8.1.6"/>
    </reaction>
</comment>
<comment type="cofactor">
    <cofactor evidence="1">
        <name>[4Fe-4S] cluster</name>
        <dbReference type="ChEBI" id="CHEBI:49883"/>
    </cofactor>
    <text evidence="1">Binds 1 [4Fe-4S] cluster. The cluster is coordinated with 3 cysteines and an exchangeable S-adenosyl-L-methionine.</text>
</comment>
<comment type="cofactor">
    <cofactor evidence="1">
        <name>[2Fe-2S] cluster</name>
        <dbReference type="ChEBI" id="CHEBI:190135"/>
    </cofactor>
    <text evidence="1">Binds 1 [2Fe-2S] cluster. The cluster is coordinated with 3 cysteines and 1 arginine.</text>
</comment>
<comment type="pathway">
    <text evidence="1">Cofactor biosynthesis; biotin biosynthesis; biotin from 7,8-diaminononanoate: step 2/2.</text>
</comment>
<comment type="subunit">
    <text evidence="1">Homodimer.</text>
</comment>
<comment type="similarity">
    <text evidence="1">Belongs to the radical SAM superfamily. Biotin synthase family.</text>
</comment>
<name>BIOB_META3</name>
<accession>A6UTF3</accession>
<gene>
    <name evidence="1" type="primary">bioB</name>
    <name type="ordered locus">Maeo_0183</name>
</gene>
<dbReference type="EC" id="2.8.1.6" evidence="1"/>
<dbReference type="EMBL" id="CP000743">
    <property type="protein sequence ID" value="ABR55775.1"/>
    <property type="molecule type" value="Genomic_DNA"/>
</dbReference>
<dbReference type="RefSeq" id="WP_011972907.1">
    <property type="nucleotide sequence ID" value="NC_009635.1"/>
</dbReference>
<dbReference type="SMR" id="A6UTF3"/>
<dbReference type="STRING" id="419665.Maeo_0183"/>
<dbReference type="GeneID" id="5326588"/>
<dbReference type="GeneID" id="75305586"/>
<dbReference type="KEGG" id="mae:Maeo_0183"/>
<dbReference type="eggNOG" id="arCOG00658">
    <property type="taxonomic scope" value="Archaea"/>
</dbReference>
<dbReference type="HOGENOM" id="CLU_033172_2_1_2"/>
<dbReference type="OrthoDB" id="9264at2157"/>
<dbReference type="UniPathway" id="UPA00078">
    <property type="reaction ID" value="UER00162"/>
</dbReference>
<dbReference type="Proteomes" id="UP000001106">
    <property type="component" value="Chromosome"/>
</dbReference>
<dbReference type="GO" id="GO:0051537">
    <property type="term" value="F:2 iron, 2 sulfur cluster binding"/>
    <property type="evidence" value="ECO:0007669"/>
    <property type="project" value="UniProtKB-KW"/>
</dbReference>
<dbReference type="GO" id="GO:0051539">
    <property type="term" value="F:4 iron, 4 sulfur cluster binding"/>
    <property type="evidence" value="ECO:0007669"/>
    <property type="project" value="UniProtKB-KW"/>
</dbReference>
<dbReference type="GO" id="GO:0004076">
    <property type="term" value="F:biotin synthase activity"/>
    <property type="evidence" value="ECO:0007669"/>
    <property type="project" value="UniProtKB-UniRule"/>
</dbReference>
<dbReference type="GO" id="GO:0005506">
    <property type="term" value="F:iron ion binding"/>
    <property type="evidence" value="ECO:0007669"/>
    <property type="project" value="UniProtKB-UniRule"/>
</dbReference>
<dbReference type="GO" id="GO:0009102">
    <property type="term" value="P:biotin biosynthetic process"/>
    <property type="evidence" value="ECO:0007669"/>
    <property type="project" value="UniProtKB-UniRule"/>
</dbReference>
<dbReference type="CDD" id="cd01335">
    <property type="entry name" value="Radical_SAM"/>
    <property type="match status" value="1"/>
</dbReference>
<dbReference type="FunFam" id="3.20.20.70:FF:000605">
    <property type="match status" value="1"/>
</dbReference>
<dbReference type="Gene3D" id="3.20.20.70">
    <property type="entry name" value="Aldolase class I"/>
    <property type="match status" value="1"/>
</dbReference>
<dbReference type="HAMAP" id="MF_01694">
    <property type="entry name" value="BioB"/>
    <property type="match status" value="1"/>
</dbReference>
<dbReference type="InterPro" id="IPR013785">
    <property type="entry name" value="Aldolase_TIM"/>
</dbReference>
<dbReference type="InterPro" id="IPR010722">
    <property type="entry name" value="BATS_dom"/>
</dbReference>
<dbReference type="InterPro" id="IPR002684">
    <property type="entry name" value="Biotin_synth/BioAB"/>
</dbReference>
<dbReference type="InterPro" id="IPR024177">
    <property type="entry name" value="Biotin_synthase"/>
</dbReference>
<dbReference type="InterPro" id="IPR006638">
    <property type="entry name" value="Elp3/MiaA/NifB-like_rSAM"/>
</dbReference>
<dbReference type="InterPro" id="IPR007197">
    <property type="entry name" value="rSAM"/>
</dbReference>
<dbReference type="NCBIfam" id="TIGR00433">
    <property type="entry name" value="bioB"/>
    <property type="match status" value="1"/>
</dbReference>
<dbReference type="PANTHER" id="PTHR22976">
    <property type="entry name" value="BIOTIN SYNTHASE"/>
    <property type="match status" value="1"/>
</dbReference>
<dbReference type="PANTHER" id="PTHR22976:SF2">
    <property type="entry name" value="BIOTIN SYNTHASE, MITOCHONDRIAL"/>
    <property type="match status" value="1"/>
</dbReference>
<dbReference type="Pfam" id="PF06968">
    <property type="entry name" value="BATS"/>
    <property type="match status" value="1"/>
</dbReference>
<dbReference type="Pfam" id="PF04055">
    <property type="entry name" value="Radical_SAM"/>
    <property type="match status" value="1"/>
</dbReference>
<dbReference type="PIRSF" id="PIRSF001619">
    <property type="entry name" value="Biotin_synth"/>
    <property type="match status" value="1"/>
</dbReference>
<dbReference type="SFLD" id="SFLDG01278">
    <property type="entry name" value="biotin_synthase_like"/>
    <property type="match status" value="1"/>
</dbReference>
<dbReference type="SFLD" id="SFLDS00029">
    <property type="entry name" value="Radical_SAM"/>
    <property type="match status" value="1"/>
</dbReference>
<dbReference type="SMART" id="SM00876">
    <property type="entry name" value="BATS"/>
    <property type="match status" value="1"/>
</dbReference>
<dbReference type="SMART" id="SM00729">
    <property type="entry name" value="Elp3"/>
    <property type="match status" value="1"/>
</dbReference>
<dbReference type="SUPFAM" id="SSF102114">
    <property type="entry name" value="Radical SAM enzymes"/>
    <property type="match status" value="1"/>
</dbReference>
<dbReference type="PROSITE" id="PS51918">
    <property type="entry name" value="RADICAL_SAM"/>
    <property type="match status" value="1"/>
</dbReference>
<sequence>MEEFTGIGYFYKKSIKNQLDKKDASLLWELPYYTLLYLANCVKKHNNSNNIDLCSIINAKSGLCSENCAFCSQSLHNSSKIKEYPLKPKEDILKQAKYIEKYSNRFSIVVSGKTVNDREYNEIIDAIKDIKKETNLKVCASLGLLDNSQLKELKDLDVRIHNNLETSKEYFDKICTTHTYDDKVKSITMAKKIGLEVCSGGIIGLGESLENRINLFYELKELDVEGIPINIYNPIKGTKTYELLNNNAIKQITPIEALKSIAICKLILPNKDVRLCGGREYNLRDWQSLSLLAIDGLMIGNYLTTNGRNIEDDIKMIVDGGFDGK</sequence>